<name>A1KA4_LOXAR</name>
<sequence>WIMGHMVNAIAQIDEFVNLGANSIETDVSFDSSANPEYTYHGVPCDCGRTCTKWKHFNEFLKGLRKATTPGDSKYHEKLVLVVFDLKTGSLYDNQASDAGKKLAKSLLQNYWNNGNNGGRAYIVLSIPNLAHYKLIAGFKEALTSEGHPELMDKVGYDFSGNDDIGDVANAYKKAGVTGHVWQSDGITNCLLRGLDRVRKAVANRDSSNGYINKVYYWTVDKRQSTRDALDAGVDGTMTNYPDVIADVLNESAYKAKFRIASYDDNPWETFKN</sequence>
<proteinExistence type="evidence at transcript level"/>
<protein>
    <recommendedName>
        <fullName evidence="7">Dermonecrotic toxin LarSicTox-alphaIB1aiv</fullName>
        <ecNumber evidence="4">4.6.1.-</ecNumber>
    </recommendedName>
    <alternativeName>
        <fullName>Phospholipase D</fullName>
        <shortName>PLD</shortName>
    </alternativeName>
    <alternativeName>
        <fullName>Sphingomyelin phosphodiesterase D</fullName>
        <shortName>SMD</shortName>
        <shortName>SMase D</shortName>
        <shortName>Sphingomyelinase D</shortName>
    </alternativeName>
</protein>
<feature type="chain" id="PRO_0000392775" description="Dermonecrotic toxin LarSicTox-alphaIB1aiv">
    <location>
        <begin position="1" status="less than"/>
        <end position="273"/>
    </location>
</feature>
<feature type="active site" evidence="5">
    <location>
        <position position="5"/>
    </location>
</feature>
<feature type="active site" description="Nucleophile" evidence="5">
    <location>
        <position position="41"/>
    </location>
</feature>
<feature type="binding site" evidence="5">
    <location>
        <position position="25"/>
    </location>
    <ligand>
        <name>Mg(2+)</name>
        <dbReference type="ChEBI" id="CHEBI:18420"/>
    </ligand>
</feature>
<feature type="binding site" evidence="5">
    <location>
        <position position="27"/>
    </location>
    <ligand>
        <name>Mg(2+)</name>
        <dbReference type="ChEBI" id="CHEBI:18420"/>
    </ligand>
</feature>
<feature type="binding site" evidence="5">
    <location>
        <position position="85"/>
    </location>
    <ligand>
        <name>Mg(2+)</name>
        <dbReference type="ChEBI" id="CHEBI:18420"/>
    </ligand>
</feature>
<feature type="glycosylation site" description="N-linked (GlcNAc...) asparagine" evidence="6">
    <location>
        <position position="250"/>
    </location>
</feature>
<feature type="disulfide bond" evidence="3">
    <location>
        <begin position="45"/>
        <end position="51"/>
    </location>
</feature>
<feature type="disulfide bond" evidence="3">
    <location>
        <begin position="47"/>
        <end position="190"/>
    </location>
</feature>
<feature type="non-terminal residue">
    <location>
        <position position="1"/>
    </location>
</feature>
<keyword id="KW-0204">Cytolysis</keyword>
<keyword id="KW-1061">Dermonecrotic toxin</keyword>
<keyword id="KW-1015">Disulfide bond</keyword>
<keyword id="KW-0325">Glycoprotein</keyword>
<keyword id="KW-0354">Hemolysis</keyword>
<keyword id="KW-0442">Lipid degradation</keyword>
<keyword id="KW-0443">Lipid metabolism</keyword>
<keyword id="KW-0456">Lyase</keyword>
<keyword id="KW-0460">Magnesium</keyword>
<keyword id="KW-0479">Metal-binding</keyword>
<keyword id="KW-0964">Secreted</keyword>
<keyword id="KW-0800">Toxin</keyword>
<reference key="1">
    <citation type="journal article" date="2009" name="Mol. Biol. Evol.">
        <title>Molecular evolution, functional variation, and proposed nomenclature of the gene family that includes sphingomyelinase D in sicariid spider venoms.</title>
        <authorList>
            <person name="Binford G.J."/>
            <person name="Bodner M.R."/>
            <person name="Cordes M.H."/>
            <person name="Baldwin K.L."/>
            <person name="Rynerson M.R."/>
            <person name="Burns S.N."/>
            <person name="Zobel-Thropp P.A."/>
        </authorList>
    </citation>
    <scope>NUCLEOTIDE SEQUENCE [MRNA]</scope>
    <scope>NOMENCLATURE</scope>
    <source>
        <tissue>Venom gland</tissue>
    </source>
</reference>
<dbReference type="EC" id="4.6.1.-" evidence="4"/>
<dbReference type="EMBL" id="FJ171387">
    <property type="protein sequence ID" value="ACN48883.1"/>
    <property type="molecule type" value="mRNA"/>
</dbReference>
<dbReference type="SMR" id="C0JAV2"/>
<dbReference type="GO" id="GO:0005576">
    <property type="term" value="C:extracellular region"/>
    <property type="evidence" value="ECO:0007669"/>
    <property type="project" value="UniProtKB-SubCell"/>
</dbReference>
<dbReference type="GO" id="GO:0016829">
    <property type="term" value="F:lyase activity"/>
    <property type="evidence" value="ECO:0007669"/>
    <property type="project" value="UniProtKB-KW"/>
</dbReference>
<dbReference type="GO" id="GO:0046872">
    <property type="term" value="F:metal ion binding"/>
    <property type="evidence" value="ECO:0007669"/>
    <property type="project" value="UniProtKB-KW"/>
</dbReference>
<dbReference type="GO" id="GO:0008081">
    <property type="term" value="F:phosphoric diester hydrolase activity"/>
    <property type="evidence" value="ECO:0007669"/>
    <property type="project" value="InterPro"/>
</dbReference>
<dbReference type="GO" id="GO:0090729">
    <property type="term" value="F:toxin activity"/>
    <property type="evidence" value="ECO:0007669"/>
    <property type="project" value="UniProtKB-KW"/>
</dbReference>
<dbReference type="GO" id="GO:0031640">
    <property type="term" value="P:killing of cells of another organism"/>
    <property type="evidence" value="ECO:0007669"/>
    <property type="project" value="UniProtKB-KW"/>
</dbReference>
<dbReference type="GO" id="GO:0016042">
    <property type="term" value="P:lipid catabolic process"/>
    <property type="evidence" value="ECO:0007669"/>
    <property type="project" value="UniProtKB-KW"/>
</dbReference>
<dbReference type="CDD" id="cd08576">
    <property type="entry name" value="GDPD_like_SMaseD_PLD"/>
    <property type="match status" value="1"/>
</dbReference>
<dbReference type="Gene3D" id="3.20.20.190">
    <property type="entry name" value="Phosphatidylinositol (PI) phosphodiesterase"/>
    <property type="match status" value="1"/>
</dbReference>
<dbReference type="InterPro" id="IPR017946">
    <property type="entry name" value="PLC-like_Pdiesterase_TIM-brl"/>
</dbReference>
<dbReference type="SUPFAM" id="SSF51695">
    <property type="entry name" value="PLC-like phosphodiesterases"/>
    <property type="match status" value="1"/>
</dbReference>
<evidence type="ECO:0000250" key="1">
    <source>
        <dbReference type="UniProtKB" id="A0A0D4WTV1"/>
    </source>
</evidence>
<evidence type="ECO:0000250" key="2">
    <source>
        <dbReference type="UniProtKB" id="A0A0D4WV12"/>
    </source>
</evidence>
<evidence type="ECO:0000250" key="3">
    <source>
        <dbReference type="UniProtKB" id="P0CE80"/>
    </source>
</evidence>
<evidence type="ECO:0000250" key="4">
    <source>
        <dbReference type="UniProtKB" id="Q4ZFU2"/>
    </source>
</evidence>
<evidence type="ECO:0000250" key="5">
    <source>
        <dbReference type="UniProtKB" id="Q8I914"/>
    </source>
</evidence>
<evidence type="ECO:0000255" key="6"/>
<evidence type="ECO:0000303" key="7">
    <source>
    </source>
</evidence>
<evidence type="ECO:0000305" key="8"/>
<evidence type="ECO:0000305" key="9">
    <source>
    </source>
</evidence>
<comment type="function">
    <text evidence="1 3">Dermonecrotic toxins cleave the phosphodiester linkage between the phosphate and headgroup of certain phospholipids (sphingolipid and lysolipid substrates), forming an alcohol (often choline) and a cyclic phosphate (By similarity). This toxin acts on sphingomyelin (SM) (By similarity). It may also act on ceramide phosphoethanolamine (CPE), lysophosphatidylcholine (LPC) and lysophosphatidylethanolamine (LPE), but not on lysophosphatidylserine (LPS), and lysophosphatidylglycerol (LPG) (By similarity). It acts by transphosphatidylation, releasing exclusively cyclic phosphate products as second products (By similarity). Induces dermonecrosis, hemolysis, increased vascular permeability, edema, inflammatory response, and platelet aggregation (By similarity).</text>
</comment>
<comment type="catalytic activity">
    <reaction evidence="1">
        <text>an N-(acyl)-sphingosylphosphocholine = an N-(acyl)-sphingosyl-1,3-cyclic phosphate + choline</text>
        <dbReference type="Rhea" id="RHEA:60652"/>
        <dbReference type="ChEBI" id="CHEBI:15354"/>
        <dbReference type="ChEBI" id="CHEBI:64583"/>
        <dbReference type="ChEBI" id="CHEBI:143892"/>
    </reaction>
</comment>
<comment type="catalytic activity">
    <reaction evidence="1">
        <text>an N-(acyl)-sphingosylphosphoethanolamine = an N-(acyl)-sphingosyl-1,3-cyclic phosphate + ethanolamine</text>
        <dbReference type="Rhea" id="RHEA:60648"/>
        <dbReference type="ChEBI" id="CHEBI:57603"/>
        <dbReference type="ChEBI" id="CHEBI:143891"/>
        <dbReference type="ChEBI" id="CHEBI:143892"/>
    </reaction>
</comment>
<comment type="catalytic activity">
    <reaction evidence="1">
        <text>a 1-acyl-sn-glycero-3-phosphocholine = a 1-acyl-sn-glycero-2,3-cyclic phosphate + choline</text>
        <dbReference type="Rhea" id="RHEA:60700"/>
        <dbReference type="ChEBI" id="CHEBI:15354"/>
        <dbReference type="ChEBI" id="CHEBI:58168"/>
        <dbReference type="ChEBI" id="CHEBI:143947"/>
    </reaction>
</comment>
<comment type="catalytic activity">
    <reaction evidence="1">
        <text>a 1-acyl-sn-glycero-3-phosphoethanolamine = a 1-acyl-sn-glycero-2,3-cyclic phosphate + ethanolamine</text>
        <dbReference type="Rhea" id="RHEA:60704"/>
        <dbReference type="ChEBI" id="CHEBI:57603"/>
        <dbReference type="ChEBI" id="CHEBI:64381"/>
        <dbReference type="ChEBI" id="CHEBI:143947"/>
    </reaction>
</comment>
<comment type="cofactor">
    <cofactor evidence="5">
        <name>Mg(2+)</name>
        <dbReference type="ChEBI" id="CHEBI:18420"/>
    </cofactor>
    <text evidence="5">Binds 1 Mg(2+) ion per subunit.</text>
</comment>
<comment type="subcellular location">
    <subcellularLocation>
        <location evidence="9">Secreted</location>
    </subcellularLocation>
</comment>
<comment type="tissue specificity">
    <text evidence="9">Expressed by the venom gland.</text>
</comment>
<comment type="similarity">
    <text evidence="8">Belongs to the arthropod phospholipase D family. Class II subfamily.</text>
</comment>
<comment type="caution">
    <text evidence="1 2 4">The most common activity assay for dermonecrotic toxins detects enzymatic activity by monitoring choline release from substrate. Liberation of choline from sphingomyelin (SM) or lysophosphatidylcholine (LPC) is commonly assumed to result from substrate hydrolysis, giving either ceramide-1-phosphate (C1P) or lysophosphatidic acid (LPA), respectively, as a second product. However, two studies from Lajoie and colleagues (2013 and 2015) report the observation of exclusive formation of cyclic phosphate products as second products, resulting from intramolecular transphosphatidylation. Cyclic phosphates have vastly different biological properties from their monoester counterparts, and they may be relevant to the pathology of brown spider envenomation.</text>
</comment>
<organism>
    <name type="scientific">Loxosceles arizonica</name>
    <name type="common">Arizona brown spider</name>
    <dbReference type="NCBI Taxonomy" id="196454"/>
    <lineage>
        <taxon>Eukaryota</taxon>
        <taxon>Metazoa</taxon>
        <taxon>Ecdysozoa</taxon>
        <taxon>Arthropoda</taxon>
        <taxon>Chelicerata</taxon>
        <taxon>Arachnida</taxon>
        <taxon>Araneae</taxon>
        <taxon>Araneomorphae</taxon>
        <taxon>Haplogynae</taxon>
        <taxon>Scytodoidea</taxon>
        <taxon>Sicariidae</taxon>
        <taxon>Loxosceles</taxon>
    </lineage>
</organism>
<accession>C0JAV2</accession>